<gene>
    <name evidence="1" type="primary">recF</name>
    <name type="ordered locus">A1C_00220</name>
</gene>
<reference key="1">
    <citation type="submission" date="2007-09" db="EMBL/GenBank/DDBJ databases">
        <title>Complete genome sequence of Rickettsia akari.</title>
        <authorList>
            <person name="Madan A."/>
            <person name="Fahey J."/>
            <person name="Helton E."/>
            <person name="Ketteman M."/>
            <person name="Madan A."/>
            <person name="Rodrigues S."/>
            <person name="Sanchez A."/>
            <person name="Whiting M."/>
            <person name="Dasch G."/>
            <person name="Eremeeva M."/>
        </authorList>
    </citation>
    <scope>NUCLEOTIDE SEQUENCE [LARGE SCALE GENOMIC DNA]</scope>
    <source>
        <strain>Hartford</strain>
    </source>
</reference>
<organism>
    <name type="scientific">Rickettsia akari (strain Hartford)</name>
    <dbReference type="NCBI Taxonomy" id="293614"/>
    <lineage>
        <taxon>Bacteria</taxon>
        <taxon>Pseudomonadati</taxon>
        <taxon>Pseudomonadota</taxon>
        <taxon>Alphaproteobacteria</taxon>
        <taxon>Rickettsiales</taxon>
        <taxon>Rickettsiaceae</taxon>
        <taxon>Rickettsieae</taxon>
        <taxon>Rickettsia</taxon>
        <taxon>spotted fever group</taxon>
    </lineage>
</organism>
<name>RECF_RICAH</name>
<evidence type="ECO:0000255" key="1">
    <source>
        <dbReference type="HAMAP-Rule" id="MF_00365"/>
    </source>
</evidence>
<sequence>MKNIFLHSLSLANYRNFKNLELKTDNTPIILIGENGSGKTNILEAISLFYPGRGLRSAKLDDICKASEDYCIVKALLQSQLGLAEFSTHIKRNSNRRITEYNESKIANNELSKFTSMVWLTPQMEGIFTSGSSDRRKFLDRIVYNFYPKHAELVSKYEYYMHERNKILAEDIRDDNWLKIIEGKMADMSSHIANNRLKTLEFMQQAIDELENEFPKADLSIDGIVEQRILDGEENLVNFITAELYQTRSKDKLLGRTSFGVHKSDFLVKHQKKNILAKFCSTGEQKAILIAIILAEMNYVIKLTKIAPILLLDEVFVHLDDTRRQYLIEFFTTLSMQLWVTDTNLEGIENFASKAQLIKL</sequence>
<feature type="chain" id="PRO_1000048565" description="DNA replication and repair protein RecF">
    <location>
        <begin position="1"/>
        <end position="360"/>
    </location>
</feature>
<feature type="binding site" evidence="1">
    <location>
        <begin position="33"/>
        <end position="40"/>
    </location>
    <ligand>
        <name>ATP</name>
        <dbReference type="ChEBI" id="CHEBI:30616"/>
    </ligand>
</feature>
<accession>A8GLV2</accession>
<dbReference type="EMBL" id="CP000847">
    <property type="protein sequence ID" value="ABV74377.1"/>
    <property type="molecule type" value="Genomic_DNA"/>
</dbReference>
<dbReference type="RefSeq" id="WP_012013247.1">
    <property type="nucleotide sequence ID" value="NC_009881.1"/>
</dbReference>
<dbReference type="SMR" id="A8GLV2"/>
<dbReference type="STRING" id="293614.A1C_00220"/>
<dbReference type="KEGG" id="rak:A1C_00220"/>
<dbReference type="eggNOG" id="COG1195">
    <property type="taxonomic scope" value="Bacteria"/>
</dbReference>
<dbReference type="HOGENOM" id="CLU_040267_2_0_5"/>
<dbReference type="Proteomes" id="UP000006830">
    <property type="component" value="Chromosome"/>
</dbReference>
<dbReference type="GO" id="GO:0005737">
    <property type="term" value="C:cytoplasm"/>
    <property type="evidence" value="ECO:0007669"/>
    <property type="project" value="UniProtKB-SubCell"/>
</dbReference>
<dbReference type="GO" id="GO:0005524">
    <property type="term" value="F:ATP binding"/>
    <property type="evidence" value="ECO:0007669"/>
    <property type="project" value="UniProtKB-UniRule"/>
</dbReference>
<dbReference type="GO" id="GO:0003697">
    <property type="term" value="F:single-stranded DNA binding"/>
    <property type="evidence" value="ECO:0007669"/>
    <property type="project" value="UniProtKB-UniRule"/>
</dbReference>
<dbReference type="GO" id="GO:0006260">
    <property type="term" value="P:DNA replication"/>
    <property type="evidence" value="ECO:0007669"/>
    <property type="project" value="UniProtKB-UniRule"/>
</dbReference>
<dbReference type="GO" id="GO:0000731">
    <property type="term" value="P:DNA synthesis involved in DNA repair"/>
    <property type="evidence" value="ECO:0007669"/>
    <property type="project" value="TreeGrafter"/>
</dbReference>
<dbReference type="GO" id="GO:0006302">
    <property type="term" value="P:double-strand break repair"/>
    <property type="evidence" value="ECO:0007669"/>
    <property type="project" value="TreeGrafter"/>
</dbReference>
<dbReference type="GO" id="GO:0009432">
    <property type="term" value="P:SOS response"/>
    <property type="evidence" value="ECO:0007669"/>
    <property type="project" value="UniProtKB-UniRule"/>
</dbReference>
<dbReference type="Gene3D" id="3.40.50.300">
    <property type="entry name" value="P-loop containing nucleotide triphosphate hydrolases"/>
    <property type="match status" value="1"/>
</dbReference>
<dbReference type="Gene3D" id="1.20.1050.90">
    <property type="entry name" value="RecF/RecN/SMC, N-terminal domain"/>
    <property type="match status" value="1"/>
</dbReference>
<dbReference type="HAMAP" id="MF_00365">
    <property type="entry name" value="RecF"/>
    <property type="match status" value="1"/>
</dbReference>
<dbReference type="InterPro" id="IPR001238">
    <property type="entry name" value="DNA-binding_RecF"/>
</dbReference>
<dbReference type="InterPro" id="IPR018078">
    <property type="entry name" value="DNA-binding_RecF_CS"/>
</dbReference>
<dbReference type="InterPro" id="IPR027417">
    <property type="entry name" value="P-loop_NTPase"/>
</dbReference>
<dbReference type="InterPro" id="IPR003395">
    <property type="entry name" value="RecF/RecN/SMC_N"/>
</dbReference>
<dbReference type="InterPro" id="IPR042174">
    <property type="entry name" value="RecF_2"/>
</dbReference>
<dbReference type="NCBIfam" id="TIGR00611">
    <property type="entry name" value="recf"/>
    <property type="match status" value="1"/>
</dbReference>
<dbReference type="PANTHER" id="PTHR32182">
    <property type="entry name" value="DNA REPLICATION AND REPAIR PROTEIN RECF"/>
    <property type="match status" value="1"/>
</dbReference>
<dbReference type="PANTHER" id="PTHR32182:SF0">
    <property type="entry name" value="DNA REPLICATION AND REPAIR PROTEIN RECF"/>
    <property type="match status" value="1"/>
</dbReference>
<dbReference type="Pfam" id="PF02463">
    <property type="entry name" value="SMC_N"/>
    <property type="match status" value="1"/>
</dbReference>
<dbReference type="SUPFAM" id="SSF52540">
    <property type="entry name" value="P-loop containing nucleoside triphosphate hydrolases"/>
    <property type="match status" value="1"/>
</dbReference>
<dbReference type="PROSITE" id="PS00617">
    <property type="entry name" value="RECF_1"/>
    <property type="match status" value="1"/>
</dbReference>
<dbReference type="PROSITE" id="PS00618">
    <property type="entry name" value="RECF_2"/>
    <property type="match status" value="1"/>
</dbReference>
<comment type="function">
    <text evidence="1">The RecF protein is involved in DNA metabolism; it is required for DNA replication and normal SOS inducibility. RecF binds preferentially to single-stranded, linear DNA. It also seems to bind ATP.</text>
</comment>
<comment type="subcellular location">
    <subcellularLocation>
        <location evidence="1">Cytoplasm</location>
    </subcellularLocation>
</comment>
<comment type="similarity">
    <text evidence="1">Belongs to the RecF family.</text>
</comment>
<protein>
    <recommendedName>
        <fullName evidence="1">DNA replication and repair protein RecF</fullName>
    </recommendedName>
</protein>
<proteinExistence type="inferred from homology"/>
<keyword id="KW-0067">ATP-binding</keyword>
<keyword id="KW-0963">Cytoplasm</keyword>
<keyword id="KW-0227">DNA damage</keyword>
<keyword id="KW-0234">DNA repair</keyword>
<keyword id="KW-0235">DNA replication</keyword>
<keyword id="KW-0238">DNA-binding</keyword>
<keyword id="KW-0547">Nucleotide-binding</keyword>
<keyword id="KW-0742">SOS response</keyword>